<comment type="function">
    <text evidence="1">mRNA decapping enzyme that specifically removes the nicotinamide adenine dinucleotide (NAD) cap from a subset of mRNAs by hydrolyzing the diphosphate linkage to produce nicotinamide mononucleotide (NMN) and 5' monophosphate mRNA. The NAD-cap is present at the 5'-end of some mRNAs and stabilizes RNA against 5'-processing. Has preference for mRNAs with a 5'-end purine. Catalyzes the hydrolysis of a broad range of dinucleotide pyrophosphates.</text>
</comment>
<comment type="catalytic activity">
    <reaction evidence="1">
        <text>a 5'-end NAD(+)-phospho-ribonucleoside in mRNA + H2O = a 5'-end phospho-adenosine-phospho-ribonucleoside in mRNA + beta-nicotinamide D-ribonucleotide + 2 H(+)</text>
        <dbReference type="Rhea" id="RHEA:60876"/>
        <dbReference type="Rhea" id="RHEA-COMP:15698"/>
        <dbReference type="Rhea" id="RHEA-COMP:15719"/>
        <dbReference type="ChEBI" id="CHEBI:14649"/>
        <dbReference type="ChEBI" id="CHEBI:15377"/>
        <dbReference type="ChEBI" id="CHEBI:15378"/>
        <dbReference type="ChEBI" id="CHEBI:144029"/>
        <dbReference type="ChEBI" id="CHEBI:144051"/>
    </reaction>
    <physiologicalReaction direction="left-to-right" evidence="1">
        <dbReference type="Rhea" id="RHEA:60877"/>
    </physiologicalReaction>
</comment>
<comment type="catalytic activity">
    <reaction evidence="1">
        <text>NAD(+) + H2O = beta-nicotinamide D-ribonucleotide + AMP + 2 H(+)</text>
        <dbReference type="Rhea" id="RHEA:11800"/>
        <dbReference type="ChEBI" id="CHEBI:14649"/>
        <dbReference type="ChEBI" id="CHEBI:15377"/>
        <dbReference type="ChEBI" id="CHEBI:15378"/>
        <dbReference type="ChEBI" id="CHEBI:57540"/>
        <dbReference type="ChEBI" id="CHEBI:456215"/>
        <dbReference type="EC" id="3.6.1.22"/>
    </reaction>
</comment>
<comment type="catalytic activity">
    <reaction evidence="1">
        <text>NADH + H2O = reduced beta-nicotinamide D-ribonucleotide + AMP + 2 H(+)</text>
        <dbReference type="Rhea" id="RHEA:48868"/>
        <dbReference type="ChEBI" id="CHEBI:15377"/>
        <dbReference type="ChEBI" id="CHEBI:15378"/>
        <dbReference type="ChEBI" id="CHEBI:57945"/>
        <dbReference type="ChEBI" id="CHEBI:90832"/>
        <dbReference type="ChEBI" id="CHEBI:456215"/>
        <dbReference type="EC" id="3.6.1.22"/>
    </reaction>
</comment>
<comment type="cofactor">
    <cofactor evidence="1">
        <name>Mg(2+)</name>
        <dbReference type="ChEBI" id="CHEBI:18420"/>
    </cofactor>
    <cofactor evidence="1">
        <name>Mn(2+)</name>
        <dbReference type="ChEBI" id="CHEBI:29035"/>
    </cofactor>
    <text evidence="1">Divalent metal cations. Mg(2+) or Mn(2+).</text>
</comment>
<comment type="cofactor">
    <cofactor evidence="1">
        <name>Zn(2+)</name>
        <dbReference type="ChEBI" id="CHEBI:29105"/>
    </cofactor>
    <text evidence="1">Binds 1 zinc ion per subunit.</text>
</comment>
<comment type="subunit">
    <text evidence="1">Homodimer.</text>
</comment>
<comment type="similarity">
    <text evidence="1">Belongs to the Nudix hydrolase family. NudC subfamily.</text>
</comment>
<evidence type="ECO:0000255" key="1">
    <source>
        <dbReference type="HAMAP-Rule" id="MF_00297"/>
    </source>
</evidence>
<gene>
    <name evidence="1" type="primary">nudC</name>
    <name type="ordered locus">c4953</name>
</gene>
<accession>Q8FB75</accession>
<reference key="1">
    <citation type="journal article" date="2002" name="Proc. Natl. Acad. Sci. U.S.A.">
        <title>Extensive mosaic structure revealed by the complete genome sequence of uropathogenic Escherichia coli.</title>
        <authorList>
            <person name="Welch R.A."/>
            <person name="Burland V."/>
            <person name="Plunkett G. III"/>
            <person name="Redford P."/>
            <person name="Roesch P."/>
            <person name="Rasko D."/>
            <person name="Buckles E.L."/>
            <person name="Liou S.-R."/>
            <person name="Boutin A."/>
            <person name="Hackett J."/>
            <person name="Stroud D."/>
            <person name="Mayhew G.F."/>
            <person name="Rose D.J."/>
            <person name="Zhou S."/>
            <person name="Schwartz D.C."/>
            <person name="Perna N.T."/>
            <person name="Mobley H.L.T."/>
            <person name="Donnenberg M.S."/>
            <person name="Blattner F.R."/>
        </authorList>
    </citation>
    <scope>NUCLEOTIDE SEQUENCE [LARGE SCALE GENOMIC DNA]</scope>
    <source>
        <strain>CFT073 / ATCC 700928 / UPEC</strain>
    </source>
</reference>
<feature type="chain" id="PRO_0000056964" description="NAD-capped RNA hydrolase NudC">
    <location>
        <begin position="1"/>
        <end position="257"/>
    </location>
</feature>
<feature type="domain" description="Nudix hydrolase" evidence="1">
    <location>
        <begin position="125"/>
        <end position="248"/>
    </location>
</feature>
<feature type="short sequence motif" description="Nudix box" evidence="1">
    <location>
        <begin position="159"/>
        <end position="180"/>
    </location>
</feature>
<feature type="binding site" evidence="1">
    <location>
        <position position="25"/>
    </location>
    <ligand>
        <name>substrate</name>
    </ligand>
</feature>
<feature type="binding site" evidence="1">
    <location>
        <position position="69"/>
    </location>
    <ligand>
        <name>substrate</name>
    </ligand>
</feature>
<feature type="binding site" evidence="1">
    <location>
        <position position="98"/>
    </location>
    <ligand>
        <name>Zn(2+)</name>
        <dbReference type="ChEBI" id="CHEBI:29105"/>
    </ligand>
</feature>
<feature type="binding site" evidence="1">
    <location>
        <position position="101"/>
    </location>
    <ligand>
        <name>Zn(2+)</name>
        <dbReference type="ChEBI" id="CHEBI:29105"/>
    </ligand>
</feature>
<feature type="binding site" evidence="1">
    <location>
        <position position="111"/>
    </location>
    <ligand>
        <name>substrate</name>
    </ligand>
</feature>
<feature type="binding site" evidence="1">
    <location>
        <position position="116"/>
    </location>
    <ligand>
        <name>Zn(2+)</name>
        <dbReference type="ChEBI" id="CHEBI:29105"/>
    </ligand>
</feature>
<feature type="binding site" evidence="1">
    <location>
        <position position="119"/>
    </location>
    <ligand>
        <name>Zn(2+)</name>
        <dbReference type="ChEBI" id="CHEBI:29105"/>
    </ligand>
</feature>
<feature type="binding site" evidence="1">
    <location>
        <position position="124"/>
    </location>
    <ligand>
        <name>substrate</name>
    </ligand>
</feature>
<feature type="binding site" evidence="1">
    <location>
        <position position="158"/>
    </location>
    <ligand>
        <name>a divalent metal cation</name>
        <dbReference type="ChEBI" id="CHEBI:60240"/>
        <label>1</label>
    </ligand>
</feature>
<feature type="binding site" evidence="1">
    <location>
        <position position="174"/>
    </location>
    <ligand>
        <name>a divalent metal cation</name>
        <dbReference type="ChEBI" id="CHEBI:60240"/>
        <label>2</label>
    </ligand>
</feature>
<feature type="binding site" evidence="1">
    <location>
        <position position="174"/>
    </location>
    <ligand>
        <name>a divalent metal cation</name>
        <dbReference type="ChEBI" id="CHEBI:60240"/>
        <label>3</label>
    </ligand>
</feature>
<feature type="binding site" evidence="1">
    <location>
        <position position="178"/>
    </location>
    <ligand>
        <name>a divalent metal cation</name>
        <dbReference type="ChEBI" id="CHEBI:60240"/>
        <label>1</label>
    </ligand>
</feature>
<feature type="binding site" evidence="1">
    <location>
        <position position="178"/>
    </location>
    <ligand>
        <name>a divalent metal cation</name>
        <dbReference type="ChEBI" id="CHEBI:60240"/>
        <label>3</label>
    </ligand>
</feature>
<feature type="binding site" evidence="1">
    <location>
        <begin position="192"/>
        <end position="199"/>
    </location>
    <ligand>
        <name>substrate</name>
    </ligand>
</feature>
<feature type="binding site" evidence="1">
    <location>
        <position position="219"/>
    </location>
    <ligand>
        <name>a divalent metal cation</name>
        <dbReference type="ChEBI" id="CHEBI:60240"/>
        <label>1</label>
    </ligand>
</feature>
<feature type="binding site" evidence="1">
    <location>
        <position position="219"/>
    </location>
    <ligand>
        <name>a divalent metal cation</name>
        <dbReference type="ChEBI" id="CHEBI:60240"/>
        <label>3</label>
    </ligand>
</feature>
<feature type="binding site" evidence="1">
    <location>
        <position position="241"/>
    </location>
    <ligand>
        <name>substrate</name>
    </ligand>
</feature>
<keyword id="KW-0378">Hydrolase</keyword>
<keyword id="KW-0460">Magnesium</keyword>
<keyword id="KW-0464">Manganese</keyword>
<keyword id="KW-0479">Metal-binding</keyword>
<keyword id="KW-0520">NAD</keyword>
<keyword id="KW-1185">Reference proteome</keyword>
<keyword id="KW-0862">Zinc</keyword>
<name>NUDC_ECOL6</name>
<proteinExistence type="inferred from homology"/>
<sequence length="257" mass="29688">MDRIIEKLDHGWWVVSHEQKLWLPKGELPYGEAANFDLVGQRALQIGEWQGEPVWLVQLQRRHDMGSVRQVIDLDVGLFQLAGRGVQLAEFYRSHKYCGYCGHEMYPSKTEWAMLCSHCRERYYPQIAPCIIVAIRRDDSILLAQHTRHRNGVHTVLAGFVEVGETLEQAVAREVMEESGIKVKNLRYVTSQPWPFPQSLMTAFMAEYDSGEIVIDPKELLEANWYRYDDLPLLPPPGTVARRLIEDTVAMCRAEYE</sequence>
<protein>
    <recommendedName>
        <fullName evidence="1">NAD-capped RNA hydrolase NudC</fullName>
        <shortName evidence="1">DeNADding enzyme NudC</shortName>
        <ecNumber evidence="1">3.6.1.-</ecNumber>
    </recommendedName>
    <alternativeName>
        <fullName evidence="1">NADH pyrophosphatase</fullName>
        <ecNumber evidence="1">3.6.1.22</ecNumber>
    </alternativeName>
</protein>
<organism>
    <name type="scientific">Escherichia coli O6:H1 (strain CFT073 / ATCC 700928 / UPEC)</name>
    <dbReference type="NCBI Taxonomy" id="199310"/>
    <lineage>
        <taxon>Bacteria</taxon>
        <taxon>Pseudomonadati</taxon>
        <taxon>Pseudomonadota</taxon>
        <taxon>Gammaproteobacteria</taxon>
        <taxon>Enterobacterales</taxon>
        <taxon>Enterobacteriaceae</taxon>
        <taxon>Escherichia</taxon>
    </lineage>
</organism>
<dbReference type="EC" id="3.6.1.-" evidence="1"/>
<dbReference type="EC" id="3.6.1.22" evidence="1"/>
<dbReference type="EMBL" id="AE014075">
    <property type="protein sequence ID" value="AAN83381.1"/>
    <property type="molecule type" value="Genomic_DNA"/>
</dbReference>
<dbReference type="RefSeq" id="WP_000373936.1">
    <property type="nucleotide sequence ID" value="NZ_CP051263.1"/>
</dbReference>
<dbReference type="SMR" id="Q8FB75"/>
<dbReference type="STRING" id="199310.c4953"/>
<dbReference type="KEGG" id="ecc:c4953"/>
<dbReference type="eggNOG" id="COG2816">
    <property type="taxonomic scope" value="Bacteria"/>
</dbReference>
<dbReference type="HOGENOM" id="CLU_037162_0_1_6"/>
<dbReference type="BioCyc" id="ECOL199310:C4953-MONOMER"/>
<dbReference type="Proteomes" id="UP000001410">
    <property type="component" value="Chromosome"/>
</dbReference>
<dbReference type="GO" id="GO:0005829">
    <property type="term" value="C:cytosol"/>
    <property type="evidence" value="ECO:0007669"/>
    <property type="project" value="TreeGrafter"/>
</dbReference>
<dbReference type="GO" id="GO:0000287">
    <property type="term" value="F:magnesium ion binding"/>
    <property type="evidence" value="ECO:0007669"/>
    <property type="project" value="UniProtKB-UniRule"/>
</dbReference>
<dbReference type="GO" id="GO:0030145">
    <property type="term" value="F:manganese ion binding"/>
    <property type="evidence" value="ECO:0007669"/>
    <property type="project" value="UniProtKB-UniRule"/>
</dbReference>
<dbReference type="GO" id="GO:0000210">
    <property type="term" value="F:NAD+ diphosphatase activity"/>
    <property type="evidence" value="ECO:0007669"/>
    <property type="project" value="UniProtKB-UniRule"/>
</dbReference>
<dbReference type="GO" id="GO:0035529">
    <property type="term" value="F:NADH pyrophosphatase activity"/>
    <property type="evidence" value="ECO:0007669"/>
    <property type="project" value="TreeGrafter"/>
</dbReference>
<dbReference type="GO" id="GO:0110153">
    <property type="term" value="F:RNA NAD-cap (NMN-forming) hydrolase activity"/>
    <property type="evidence" value="ECO:0007669"/>
    <property type="project" value="RHEA"/>
</dbReference>
<dbReference type="GO" id="GO:0008270">
    <property type="term" value="F:zinc ion binding"/>
    <property type="evidence" value="ECO:0007669"/>
    <property type="project" value="UniProtKB-UniRule"/>
</dbReference>
<dbReference type="GO" id="GO:0019677">
    <property type="term" value="P:NAD catabolic process"/>
    <property type="evidence" value="ECO:0007669"/>
    <property type="project" value="TreeGrafter"/>
</dbReference>
<dbReference type="GO" id="GO:0006734">
    <property type="term" value="P:NADH metabolic process"/>
    <property type="evidence" value="ECO:0007669"/>
    <property type="project" value="TreeGrafter"/>
</dbReference>
<dbReference type="GO" id="GO:0006742">
    <property type="term" value="P:NADP catabolic process"/>
    <property type="evidence" value="ECO:0007669"/>
    <property type="project" value="TreeGrafter"/>
</dbReference>
<dbReference type="CDD" id="cd03429">
    <property type="entry name" value="NUDIX_NADH_pyrophosphatase_Nudt13"/>
    <property type="match status" value="1"/>
</dbReference>
<dbReference type="FunFam" id="3.90.79.10:FF:000004">
    <property type="entry name" value="NADH pyrophosphatase"/>
    <property type="match status" value="1"/>
</dbReference>
<dbReference type="FunFam" id="3.90.79.20:FF:000001">
    <property type="entry name" value="NADH pyrophosphatase"/>
    <property type="match status" value="1"/>
</dbReference>
<dbReference type="Gene3D" id="3.90.79.20">
    <property type="match status" value="1"/>
</dbReference>
<dbReference type="Gene3D" id="3.90.79.10">
    <property type="entry name" value="Nucleoside Triphosphate Pyrophosphohydrolase"/>
    <property type="match status" value="1"/>
</dbReference>
<dbReference type="HAMAP" id="MF_00297">
    <property type="entry name" value="Nudix_NudC"/>
    <property type="match status" value="1"/>
</dbReference>
<dbReference type="InterPro" id="IPR050241">
    <property type="entry name" value="NAD-cap_RNA_hydrolase_NudC"/>
</dbReference>
<dbReference type="InterPro" id="IPR049734">
    <property type="entry name" value="NudC-like_C"/>
</dbReference>
<dbReference type="InterPro" id="IPR015797">
    <property type="entry name" value="NUDIX_hydrolase-like_dom_sf"/>
</dbReference>
<dbReference type="InterPro" id="IPR020084">
    <property type="entry name" value="NUDIX_hydrolase_CS"/>
</dbReference>
<dbReference type="InterPro" id="IPR000086">
    <property type="entry name" value="NUDIX_hydrolase_dom"/>
</dbReference>
<dbReference type="InterPro" id="IPR022925">
    <property type="entry name" value="RNA_Hydrolase_NudC"/>
</dbReference>
<dbReference type="InterPro" id="IPR015376">
    <property type="entry name" value="Znr_NADH_PPase"/>
</dbReference>
<dbReference type="NCBIfam" id="NF001299">
    <property type="entry name" value="PRK00241.1"/>
    <property type="match status" value="1"/>
</dbReference>
<dbReference type="PANTHER" id="PTHR42904:SF6">
    <property type="entry name" value="NAD-CAPPED RNA HYDROLASE NUDT12"/>
    <property type="match status" value="1"/>
</dbReference>
<dbReference type="PANTHER" id="PTHR42904">
    <property type="entry name" value="NUDIX HYDROLASE, NUDC SUBFAMILY"/>
    <property type="match status" value="1"/>
</dbReference>
<dbReference type="Pfam" id="PF00293">
    <property type="entry name" value="NUDIX"/>
    <property type="match status" value="1"/>
</dbReference>
<dbReference type="Pfam" id="PF09297">
    <property type="entry name" value="Zn_ribbon_NUD"/>
    <property type="match status" value="1"/>
</dbReference>
<dbReference type="SUPFAM" id="SSF55811">
    <property type="entry name" value="Nudix"/>
    <property type="match status" value="2"/>
</dbReference>
<dbReference type="PROSITE" id="PS51462">
    <property type="entry name" value="NUDIX"/>
    <property type="match status" value="1"/>
</dbReference>
<dbReference type="PROSITE" id="PS00893">
    <property type="entry name" value="NUDIX_BOX"/>
    <property type="match status" value="1"/>
</dbReference>